<dbReference type="EC" id="1.18.1.-" evidence="1"/>
<dbReference type="EMBL" id="CP000038">
    <property type="protein sequence ID" value="AAZ89459.1"/>
    <property type="molecule type" value="Genomic_DNA"/>
</dbReference>
<dbReference type="RefSeq" id="WP_000064724.1">
    <property type="nucleotide sequence ID" value="NC_007384.1"/>
</dbReference>
<dbReference type="SMR" id="Q3YYF3"/>
<dbReference type="GeneID" id="93779300"/>
<dbReference type="KEGG" id="ssn:SSON_2855"/>
<dbReference type="HOGENOM" id="CLU_003291_4_4_6"/>
<dbReference type="UniPathway" id="UPA00638"/>
<dbReference type="Proteomes" id="UP000002529">
    <property type="component" value="Chromosome"/>
</dbReference>
<dbReference type="GO" id="GO:0005737">
    <property type="term" value="C:cytoplasm"/>
    <property type="evidence" value="ECO:0007669"/>
    <property type="project" value="UniProtKB-SubCell"/>
</dbReference>
<dbReference type="GO" id="GO:0016731">
    <property type="term" value="F:oxidoreductase activity, acting on iron-sulfur proteins as donors, NAD or NADP as acceptor"/>
    <property type="evidence" value="ECO:0007669"/>
    <property type="project" value="UniProtKB-UniRule"/>
</dbReference>
<dbReference type="FunFam" id="3.30.390.120:FF:000001">
    <property type="entry name" value="Nitric oxide reductase FlRd-NAD(+) reductase"/>
    <property type="match status" value="1"/>
</dbReference>
<dbReference type="FunFam" id="3.50.50.60:FF:000075">
    <property type="entry name" value="Nitric oxide reductase FlRd-NAD(+) reductase"/>
    <property type="match status" value="1"/>
</dbReference>
<dbReference type="Gene3D" id="3.30.390.120">
    <property type="match status" value="1"/>
</dbReference>
<dbReference type="Gene3D" id="3.50.50.60">
    <property type="entry name" value="FAD/NAD(P)-binding domain"/>
    <property type="match status" value="2"/>
</dbReference>
<dbReference type="HAMAP" id="MF_01313">
    <property type="entry name" value="NorW"/>
    <property type="match status" value="1"/>
</dbReference>
<dbReference type="InterPro" id="IPR050260">
    <property type="entry name" value="FAD-bd_OxRdtase"/>
</dbReference>
<dbReference type="InterPro" id="IPR036188">
    <property type="entry name" value="FAD/NAD-bd_sf"/>
</dbReference>
<dbReference type="InterPro" id="IPR023753">
    <property type="entry name" value="FAD/NAD-binding_dom"/>
</dbReference>
<dbReference type="InterPro" id="IPR023961">
    <property type="entry name" value="NO_rdtase_NorW"/>
</dbReference>
<dbReference type="InterPro" id="IPR041364">
    <property type="entry name" value="Rbx-bd"/>
</dbReference>
<dbReference type="NCBIfam" id="NF003437">
    <property type="entry name" value="PRK04965.1"/>
    <property type="match status" value="1"/>
</dbReference>
<dbReference type="PANTHER" id="PTHR43429:SF3">
    <property type="entry name" value="NITRITE REDUCTASE [NAD(P)H]"/>
    <property type="match status" value="1"/>
</dbReference>
<dbReference type="PANTHER" id="PTHR43429">
    <property type="entry name" value="PYRIDINE NUCLEOTIDE-DISULFIDE OXIDOREDUCTASE DOMAIN-CONTAINING"/>
    <property type="match status" value="1"/>
</dbReference>
<dbReference type="Pfam" id="PF07992">
    <property type="entry name" value="Pyr_redox_2"/>
    <property type="match status" value="1"/>
</dbReference>
<dbReference type="Pfam" id="PF18113">
    <property type="entry name" value="Rbx_binding"/>
    <property type="match status" value="1"/>
</dbReference>
<dbReference type="PRINTS" id="PR00368">
    <property type="entry name" value="FADPNR"/>
</dbReference>
<dbReference type="PRINTS" id="PR00411">
    <property type="entry name" value="PNDRDTASEI"/>
</dbReference>
<dbReference type="SUPFAM" id="SSF51905">
    <property type="entry name" value="FAD/NAD(P)-binding domain"/>
    <property type="match status" value="1"/>
</dbReference>
<name>NORW_SHISS</name>
<reference key="1">
    <citation type="journal article" date="2005" name="Nucleic Acids Res.">
        <title>Genome dynamics and diversity of Shigella species, the etiologic agents of bacillary dysentery.</title>
        <authorList>
            <person name="Yang F."/>
            <person name="Yang J."/>
            <person name="Zhang X."/>
            <person name="Chen L."/>
            <person name="Jiang Y."/>
            <person name="Yan Y."/>
            <person name="Tang X."/>
            <person name="Wang J."/>
            <person name="Xiong Z."/>
            <person name="Dong J."/>
            <person name="Xue Y."/>
            <person name="Zhu Y."/>
            <person name="Xu X."/>
            <person name="Sun L."/>
            <person name="Chen S."/>
            <person name="Nie H."/>
            <person name="Peng J."/>
            <person name="Xu J."/>
            <person name="Wang Y."/>
            <person name="Yuan Z."/>
            <person name="Wen Y."/>
            <person name="Yao Z."/>
            <person name="Shen Y."/>
            <person name="Qiang B."/>
            <person name="Hou Y."/>
            <person name="Yu J."/>
            <person name="Jin Q."/>
        </authorList>
    </citation>
    <scope>NUCLEOTIDE SEQUENCE [LARGE SCALE GENOMIC DNA]</scope>
    <source>
        <strain>Ss046</strain>
    </source>
</reference>
<gene>
    <name evidence="1" type="primary">norW</name>
    <name evidence="1" type="synonym">flrR</name>
    <name type="ordered locus">SSON_2855</name>
</gene>
<protein>
    <recommendedName>
        <fullName evidence="1">Nitric oxide reductase FlRd-NAD(+) reductase</fullName>
        <ecNumber evidence="1">1.18.1.-</ecNumber>
    </recommendedName>
    <alternativeName>
        <fullName evidence="1">Flavorubredoxin reductase</fullName>
        <shortName evidence="1">FlRd-reductase</shortName>
        <shortName evidence="1">FlavoRb reductase</shortName>
    </alternativeName>
</protein>
<accession>Q3YYF3</accession>
<proteinExistence type="inferred from homology"/>
<feature type="chain" id="PRO_0000305613" description="Nitric oxide reductase FlRd-NAD(+) reductase">
    <location>
        <begin position="1"/>
        <end position="377"/>
    </location>
</feature>
<comment type="function">
    <text evidence="1">One of at least two accessory proteins for anaerobic nitric oxide (NO) reductase. Reduces the rubredoxin moiety of NO reductase.</text>
</comment>
<comment type="catalytic activity">
    <reaction evidence="1">
        <text>2 reduced [nitric oxide reductase rubredoxin domain] + NAD(+) + H(+) = 2 oxidized [nitric oxide reductase rubredoxin domain] + NADH</text>
        <dbReference type="Rhea" id="RHEA:42960"/>
        <dbReference type="Rhea" id="RHEA-COMP:10304"/>
        <dbReference type="Rhea" id="RHEA-COMP:10305"/>
        <dbReference type="ChEBI" id="CHEBI:15378"/>
        <dbReference type="ChEBI" id="CHEBI:29033"/>
        <dbReference type="ChEBI" id="CHEBI:29034"/>
        <dbReference type="ChEBI" id="CHEBI:57540"/>
        <dbReference type="ChEBI" id="CHEBI:57945"/>
    </reaction>
</comment>
<comment type="cofactor">
    <cofactor evidence="1">
        <name>FAD</name>
        <dbReference type="ChEBI" id="CHEBI:57692"/>
    </cofactor>
</comment>
<comment type="pathway">
    <text evidence="1">Nitrogen metabolism; nitric oxide reduction.</text>
</comment>
<comment type="subcellular location">
    <subcellularLocation>
        <location evidence="1">Cytoplasm</location>
    </subcellularLocation>
</comment>
<comment type="similarity">
    <text evidence="1">Belongs to the FAD-dependent oxidoreductase family.</text>
</comment>
<organism>
    <name type="scientific">Shigella sonnei (strain Ss046)</name>
    <dbReference type="NCBI Taxonomy" id="300269"/>
    <lineage>
        <taxon>Bacteria</taxon>
        <taxon>Pseudomonadati</taxon>
        <taxon>Pseudomonadota</taxon>
        <taxon>Gammaproteobacteria</taxon>
        <taxon>Enterobacterales</taxon>
        <taxon>Enterobacteriaceae</taxon>
        <taxon>Shigella</taxon>
    </lineage>
</organism>
<sequence>MSNGIVIIGSGFAARQLVKNIRKQDASIPLTLIAADSMDEYNKPDLSHVISQGQRADDLTRQTAGEFAGQFNLHLFPHTWVTDIDAEAHVVKSQNNQWQYDKLVLATGASAFVPPVPGRELMLTLNSQQEYRACETQLRDARRVLIVGGGLIGSELAMDFCRAGKAVTLIDNAASILASLMPPEVSSRLQHRLTEMGVHLLLKSQLQGLEKTDSGILATLDHQRSIEVDAVIAATGLRPETALARRAGLTINRGVCVDSYLQTSNDDIYALGDCAEINGQVLPFLQPIQLSAMVLAKNLLGNNTPLKLPAMLVKIKTPELPLHLAGETQRQDLRWQINTERQGMVARGVDDADQLRAFVVSEDRMKEAFGLLKTLPM</sequence>
<keyword id="KW-0963">Cytoplasm</keyword>
<keyword id="KW-0274">FAD</keyword>
<keyword id="KW-0285">Flavoprotein</keyword>
<keyword id="KW-0520">NAD</keyword>
<keyword id="KW-0560">Oxidoreductase</keyword>
<keyword id="KW-1185">Reference proteome</keyword>
<evidence type="ECO:0000255" key="1">
    <source>
        <dbReference type="HAMAP-Rule" id="MF_01313"/>
    </source>
</evidence>